<dbReference type="EMBL" id="CP000102">
    <property type="protein sequence ID" value="ABC57571.1"/>
    <property type="molecule type" value="Genomic_DNA"/>
</dbReference>
<dbReference type="RefSeq" id="WP_011406770.1">
    <property type="nucleotide sequence ID" value="NC_007681.1"/>
</dbReference>
<dbReference type="SMR" id="Q2NF32"/>
<dbReference type="STRING" id="339860.Msp_1190"/>
<dbReference type="KEGG" id="mst:Msp_1190"/>
<dbReference type="eggNOG" id="arCOG01217">
    <property type="taxonomic scope" value="Archaea"/>
</dbReference>
<dbReference type="HOGENOM" id="CLU_169299_1_0_2"/>
<dbReference type="OrthoDB" id="56356at2157"/>
<dbReference type="Proteomes" id="UP000001931">
    <property type="component" value="Chromosome"/>
</dbReference>
<dbReference type="GO" id="GO:0048500">
    <property type="term" value="C:signal recognition particle"/>
    <property type="evidence" value="ECO:0007669"/>
    <property type="project" value="UniProtKB-UniRule"/>
</dbReference>
<dbReference type="GO" id="GO:0008312">
    <property type="term" value="F:7S RNA binding"/>
    <property type="evidence" value="ECO:0007669"/>
    <property type="project" value="UniProtKB-UniRule"/>
</dbReference>
<dbReference type="GO" id="GO:0006617">
    <property type="term" value="P:SRP-dependent cotranslational protein targeting to membrane, signal sequence recognition"/>
    <property type="evidence" value="ECO:0007669"/>
    <property type="project" value="TreeGrafter"/>
</dbReference>
<dbReference type="Gene3D" id="3.30.56.30">
    <property type="entry name" value="Signal recognition particle, SRP19-like subunit"/>
    <property type="match status" value="1"/>
</dbReference>
<dbReference type="HAMAP" id="MF_00305">
    <property type="entry name" value="SRP19"/>
    <property type="match status" value="1"/>
</dbReference>
<dbReference type="InterPro" id="IPR002778">
    <property type="entry name" value="Signal_recog_particle_SRP19"/>
</dbReference>
<dbReference type="InterPro" id="IPR036521">
    <property type="entry name" value="SRP19-like_sf"/>
</dbReference>
<dbReference type="InterPro" id="IPR022938">
    <property type="entry name" value="SRP19_arc-type"/>
</dbReference>
<dbReference type="PANTHER" id="PTHR17453">
    <property type="entry name" value="SIGNAL RECOGNITION PARTICLE 19 KD PROTEIN"/>
    <property type="match status" value="1"/>
</dbReference>
<dbReference type="PANTHER" id="PTHR17453:SF0">
    <property type="entry name" value="SIGNAL RECOGNITION PARTICLE 19 KDA PROTEIN"/>
    <property type="match status" value="1"/>
</dbReference>
<dbReference type="Pfam" id="PF01922">
    <property type="entry name" value="SRP19"/>
    <property type="match status" value="1"/>
</dbReference>
<dbReference type="SUPFAM" id="SSF69695">
    <property type="entry name" value="SRP19"/>
    <property type="match status" value="1"/>
</dbReference>
<gene>
    <name evidence="1" type="primary">srp19</name>
    <name type="ordered locus">Msp_1190</name>
</gene>
<keyword id="KW-0963">Cytoplasm</keyword>
<keyword id="KW-1185">Reference proteome</keyword>
<keyword id="KW-0687">Ribonucleoprotein</keyword>
<keyword id="KW-0694">RNA-binding</keyword>
<keyword id="KW-0733">Signal recognition particle</keyword>
<organism>
    <name type="scientific">Methanosphaera stadtmanae (strain ATCC 43021 / DSM 3091 / JCM 11832 / MCB-3)</name>
    <dbReference type="NCBI Taxonomy" id="339860"/>
    <lineage>
        <taxon>Archaea</taxon>
        <taxon>Methanobacteriati</taxon>
        <taxon>Methanobacteriota</taxon>
        <taxon>Methanomada group</taxon>
        <taxon>Methanobacteria</taxon>
        <taxon>Methanobacteriales</taxon>
        <taxon>Methanobacteriaceae</taxon>
        <taxon>Methanosphaera</taxon>
    </lineage>
</organism>
<evidence type="ECO:0000255" key="1">
    <source>
        <dbReference type="HAMAP-Rule" id="MF_00305"/>
    </source>
</evidence>
<protein>
    <recommendedName>
        <fullName evidence="1">Signal recognition particle 19 kDa protein</fullName>
        <shortName evidence="1">SRP19</shortName>
    </recommendedName>
</protein>
<comment type="function">
    <text evidence="1">Involved in targeting and insertion of nascent membrane proteins into the cytoplasmic membrane. Binds directly to 7S RNA and mediates binding of the 54 kDa subunit of the SRP.</text>
</comment>
<comment type="subunit">
    <text evidence="1">Part of the signal recognition particle protein translocation system, which is composed of SRP and FtsY. Archaeal SRP consists of a 7S RNA molecule of 300 nucleotides and two protein subunits: SRP54 and SRP19.</text>
</comment>
<comment type="subcellular location">
    <subcellularLocation>
        <location evidence="1">Cytoplasm</location>
    </subcellularLocation>
</comment>
<comment type="similarity">
    <text evidence="1">Belongs to the SRP19 family.</text>
</comment>
<feature type="chain" id="PRO_0000300748" description="Signal recognition particle 19 kDa protein">
    <location>
        <begin position="1"/>
        <end position="92"/>
    </location>
</feature>
<name>SRP19_METST</name>
<accession>Q2NF32</accession>
<reference key="1">
    <citation type="journal article" date="2006" name="J. Bacteriol.">
        <title>The genome sequence of Methanosphaera stadtmanae reveals why this human intestinal archaeon is restricted to methanol and H2 for methane formation and ATP synthesis.</title>
        <authorList>
            <person name="Fricke W.F."/>
            <person name="Seedorf H."/>
            <person name="Henne A."/>
            <person name="Kruer M."/>
            <person name="Liesegang H."/>
            <person name="Hedderich R."/>
            <person name="Gottschalk G."/>
            <person name="Thauer R.K."/>
        </authorList>
    </citation>
    <scope>NUCLEOTIDE SEQUENCE [LARGE SCALE GENOMIC DNA]</scope>
    <source>
        <strain>ATCC 43021 / DSM 3091 / JCM 11832 / MCB-3</strain>
    </source>
</reference>
<proteinExistence type="inferred from homology"/>
<sequence length="92" mass="10811">MKTIIWPTYINSEHSRGEGRKLSLEESVEEPKIREISQSLKKLKIQYVVEHNKSYPGSWWEKSGRVVVEQEDMTKLELLRAIAKNIKNSRNN</sequence>